<comment type="function">
    <text evidence="1">The RuvA-RuvB-RuvC complex processes Holliday junction (HJ) DNA during genetic recombination and DNA repair, while the RuvA-RuvB complex plays an important role in the rescue of blocked DNA replication forks via replication fork reversal (RFR). RuvA specifically binds to HJ cruciform DNA, conferring on it an open structure. The RuvB hexamer acts as an ATP-dependent pump, pulling dsDNA into and through the RuvAB complex. HJ branch migration allows RuvC to scan DNA until it finds its consensus sequence, where it cleaves and resolves the cruciform DNA.</text>
</comment>
<comment type="subunit">
    <text evidence="1">Homotetramer. Forms an RuvA(8)-RuvB(12)-Holliday junction (HJ) complex. HJ DNA is sandwiched between 2 RuvA tetramers; dsDNA enters through RuvA and exits via RuvB. An RuvB hexamer assembles on each DNA strand where it exits the tetramer. Each RuvB hexamer is contacted by two RuvA subunits (via domain III) on 2 adjacent RuvB subunits; this complex drives branch migration. In the full resolvosome a probable DNA-RuvA(4)-RuvB(12)-RuvC(2) complex forms which resolves the HJ.</text>
</comment>
<comment type="subcellular location">
    <subcellularLocation>
        <location evidence="1">Cytoplasm</location>
    </subcellularLocation>
</comment>
<comment type="domain">
    <text evidence="1">Has three domains with a flexible linker between the domains II and III and assumes an 'L' shape. Domain III is highly mobile and contacts RuvB.</text>
</comment>
<comment type="similarity">
    <text evidence="1">Belongs to the RuvA family.</text>
</comment>
<reference key="1">
    <citation type="journal article" date="2004" name="Proc. Natl. Acad. Sci. U.S.A.">
        <title>The louse-borne human pathogen Bartonella quintana is a genomic derivative of the zoonotic agent Bartonella henselae.</title>
        <authorList>
            <person name="Alsmark U.C.M."/>
            <person name="Frank A.C."/>
            <person name="Karlberg E.O."/>
            <person name="Legault B.-A."/>
            <person name="Ardell D.H."/>
            <person name="Canbaeck B."/>
            <person name="Eriksson A.-S."/>
            <person name="Naeslund A.K."/>
            <person name="Handley S.A."/>
            <person name="Huvet M."/>
            <person name="La Scola B."/>
            <person name="Holmberg M."/>
            <person name="Andersson S.G.E."/>
        </authorList>
    </citation>
    <scope>NUCLEOTIDE SEQUENCE [LARGE SCALE GENOMIC DNA]</scope>
    <source>
        <strain>Toulouse</strain>
    </source>
</reference>
<dbReference type="EMBL" id="BX897700">
    <property type="protein sequence ID" value="CAF26647.1"/>
    <property type="molecule type" value="Genomic_DNA"/>
</dbReference>
<dbReference type="RefSeq" id="WP_011179820.1">
    <property type="nucleotide sequence ID" value="NC_005955.1"/>
</dbReference>
<dbReference type="SMR" id="Q6FYP5"/>
<dbReference type="GeneID" id="56533520"/>
<dbReference type="KEGG" id="bqu:BQ11880"/>
<dbReference type="eggNOG" id="COG0632">
    <property type="taxonomic scope" value="Bacteria"/>
</dbReference>
<dbReference type="HOGENOM" id="CLU_087936_3_0_5"/>
<dbReference type="OrthoDB" id="5293449at2"/>
<dbReference type="Proteomes" id="UP000000597">
    <property type="component" value="Chromosome"/>
</dbReference>
<dbReference type="GO" id="GO:0005737">
    <property type="term" value="C:cytoplasm"/>
    <property type="evidence" value="ECO:0007669"/>
    <property type="project" value="UniProtKB-SubCell"/>
</dbReference>
<dbReference type="GO" id="GO:0009379">
    <property type="term" value="C:Holliday junction helicase complex"/>
    <property type="evidence" value="ECO:0007669"/>
    <property type="project" value="InterPro"/>
</dbReference>
<dbReference type="GO" id="GO:0048476">
    <property type="term" value="C:Holliday junction resolvase complex"/>
    <property type="evidence" value="ECO:0007669"/>
    <property type="project" value="UniProtKB-UniRule"/>
</dbReference>
<dbReference type="GO" id="GO:0005524">
    <property type="term" value="F:ATP binding"/>
    <property type="evidence" value="ECO:0007669"/>
    <property type="project" value="InterPro"/>
</dbReference>
<dbReference type="GO" id="GO:0000400">
    <property type="term" value="F:four-way junction DNA binding"/>
    <property type="evidence" value="ECO:0007669"/>
    <property type="project" value="UniProtKB-UniRule"/>
</dbReference>
<dbReference type="GO" id="GO:0009378">
    <property type="term" value="F:four-way junction helicase activity"/>
    <property type="evidence" value="ECO:0007669"/>
    <property type="project" value="InterPro"/>
</dbReference>
<dbReference type="GO" id="GO:0006310">
    <property type="term" value="P:DNA recombination"/>
    <property type="evidence" value="ECO:0007669"/>
    <property type="project" value="UniProtKB-UniRule"/>
</dbReference>
<dbReference type="GO" id="GO:0006281">
    <property type="term" value="P:DNA repair"/>
    <property type="evidence" value="ECO:0007669"/>
    <property type="project" value="UniProtKB-UniRule"/>
</dbReference>
<dbReference type="CDD" id="cd14332">
    <property type="entry name" value="UBA_RuvA_C"/>
    <property type="match status" value="1"/>
</dbReference>
<dbReference type="Gene3D" id="1.10.150.20">
    <property type="entry name" value="5' to 3' exonuclease, C-terminal subdomain"/>
    <property type="match status" value="1"/>
</dbReference>
<dbReference type="Gene3D" id="1.10.8.10">
    <property type="entry name" value="DNA helicase RuvA subunit, C-terminal domain"/>
    <property type="match status" value="1"/>
</dbReference>
<dbReference type="Gene3D" id="2.40.50.140">
    <property type="entry name" value="Nucleic acid-binding proteins"/>
    <property type="match status" value="1"/>
</dbReference>
<dbReference type="HAMAP" id="MF_00031">
    <property type="entry name" value="DNA_HJ_migration_RuvA"/>
    <property type="match status" value="1"/>
</dbReference>
<dbReference type="InterPro" id="IPR013849">
    <property type="entry name" value="DNA_helicase_Holl-junc_RuvA_I"/>
</dbReference>
<dbReference type="InterPro" id="IPR003583">
    <property type="entry name" value="Hlx-hairpin-Hlx_DNA-bd_motif"/>
</dbReference>
<dbReference type="InterPro" id="IPR012340">
    <property type="entry name" value="NA-bd_OB-fold"/>
</dbReference>
<dbReference type="InterPro" id="IPR000085">
    <property type="entry name" value="RuvA"/>
</dbReference>
<dbReference type="InterPro" id="IPR010994">
    <property type="entry name" value="RuvA_2-like"/>
</dbReference>
<dbReference type="InterPro" id="IPR011114">
    <property type="entry name" value="RuvA_C"/>
</dbReference>
<dbReference type="InterPro" id="IPR036267">
    <property type="entry name" value="RuvA_C_sf"/>
</dbReference>
<dbReference type="NCBIfam" id="TIGR00084">
    <property type="entry name" value="ruvA"/>
    <property type="match status" value="1"/>
</dbReference>
<dbReference type="Pfam" id="PF14520">
    <property type="entry name" value="HHH_5"/>
    <property type="match status" value="1"/>
</dbReference>
<dbReference type="Pfam" id="PF07499">
    <property type="entry name" value="RuvA_C"/>
    <property type="match status" value="1"/>
</dbReference>
<dbReference type="Pfam" id="PF01330">
    <property type="entry name" value="RuvA_N"/>
    <property type="match status" value="1"/>
</dbReference>
<dbReference type="SMART" id="SM00278">
    <property type="entry name" value="HhH1"/>
    <property type="match status" value="2"/>
</dbReference>
<dbReference type="SUPFAM" id="SSF46929">
    <property type="entry name" value="DNA helicase RuvA subunit, C-terminal domain"/>
    <property type="match status" value="1"/>
</dbReference>
<dbReference type="SUPFAM" id="SSF50249">
    <property type="entry name" value="Nucleic acid-binding proteins"/>
    <property type="match status" value="1"/>
</dbReference>
<dbReference type="SUPFAM" id="SSF47781">
    <property type="entry name" value="RuvA domain 2-like"/>
    <property type="match status" value="1"/>
</dbReference>
<protein>
    <recommendedName>
        <fullName evidence="1">Holliday junction branch migration complex subunit RuvA</fullName>
    </recommendedName>
</protein>
<gene>
    <name evidence="1" type="primary">ruvA</name>
    <name type="ordered locus">BQ11880</name>
</gene>
<sequence>MIGKLKGILEHVFDDHIIVDVQGVGYVVFISNRLRPSLPALGESLSLFIETHVREEAIRLFGFVAKAEQEWFCLLQNVPGVGAKVALAILGTLSPDELAQAIALNDIAMISRAPGVGKKVSERIVSELKSKALPFNDNALHFTPQPHLEVTHQPTNDALSALVKLGFERDQAARALALAMNALEGETVSSALLIRHSLKLLSPST</sequence>
<name>RUVA_BARQU</name>
<organism>
    <name type="scientific">Bartonella quintana (strain Toulouse)</name>
    <name type="common">Rochalimaea quintana</name>
    <dbReference type="NCBI Taxonomy" id="283165"/>
    <lineage>
        <taxon>Bacteria</taxon>
        <taxon>Pseudomonadati</taxon>
        <taxon>Pseudomonadota</taxon>
        <taxon>Alphaproteobacteria</taxon>
        <taxon>Hyphomicrobiales</taxon>
        <taxon>Bartonellaceae</taxon>
        <taxon>Bartonella</taxon>
    </lineage>
</organism>
<evidence type="ECO:0000255" key="1">
    <source>
        <dbReference type="HAMAP-Rule" id="MF_00031"/>
    </source>
</evidence>
<proteinExistence type="inferred from homology"/>
<accession>Q6FYP5</accession>
<feature type="chain" id="PRO_0000224845" description="Holliday junction branch migration complex subunit RuvA">
    <location>
        <begin position="1"/>
        <end position="205"/>
    </location>
</feature>
<feature type="region of interest" description="Domain I" evidence="1">
    <location>
        <begin position="1"/>
        <end position="64"/>
    </location>
</feature>
<feature type="region of interest" description="Domain II" evidence="1">
    <location>
        <begin position="65"/>
        <end position="143"/>
    </location>
</feature>
<feature type="region of interest" description="Flexible linker" evidence="1">
    <location>
        <begin position="144"/>
        <end position="149"/>
    </location>
</feature>
<feature type="region of interest" description="Domain III" evidence="1">
    <location>
        <begin position="150"/>
        <end position="205"/>
    </location>
</feature>
<keyword id="KW-0963">Cytoplasm</keyword>
<keyword id="KW-0227">DNA damage</keyword>
<keyword id="KW-0233">DNA recombination</keyword>
<keyword id="KW-0234">DNA repair</keyword>
<keyword id="KW-0238">DNA-binding</keyword>